<comment type="function">
    <text evidence="1">Flagellar protein that affects chemotactic events.</text>
</comment>
<comment type="subcellular location">
    <subcellularLocation>
        <location evidence="1">Cell membrane</location>
        <topology evidence="1">Peripheral membrane protein</topology>
        <orientation evidence="1">Cytoplasmic side</orientation>
    </subcellularLocation>
</comment>
<comment type="similarity">
    <text evidence="2">Belongs to the FliJ family.</text>
</comment>
<sequence length="139" mass="15656">MTKWAASLIRISNHEVETLQKRLAEITERRMAAEMRVTLLDAEAEAEAKNAEGDPSAGWYMIGYREGSKRRRADMLVQIEQCQQEEAGARDALSEAFENLKKYEHVAEQAKILAAKKMNAFEAAQMDELSIRRAAVGGR</sequence>
<protein>
    <recommendedName>
        <fullName>Flagellar FliJ protein</fullName>
    </recommendedName>
</protein>
<feature type="chain" id="PRO_0000180900" description="Flagellar FliJ protein">
    <location>
        <begin position="1"/>
        <end position="139"/>
    </location>
</feature>
<organism>
    <name type="scientific">Caulobacter vibrioides (strain ATCC 19089 / CIP 103742 / CB 15)</name>
    <name type="common">Caulobacter crescentus</name>
    <dbReference type="NCBI Taxonomy" id="190650"/>
    <lineage>
        <taxon>Bacteria</taxon>
        <taxon>Pseudomonadati</taxon>
        <taxon>Pseudomonadota</taxon>
        <taxon>Alphaproteobacteria</taxon>
        <taxon>Caulobacterales</taxon>
        <taxon>Caulobacteraceae</taxon>
        <taxon>Caulobacter</taxon>
    </lineage>
</organism>
<gene>
    <name type="primary">fliJ</name>
    <name type="ordered locus">CC_3041</name>
</gene>
<reference key="1">
    <citation type="journal article" date="2001" name="Proc. Natl. Acad. Sci. U.S.A.">
        <title>Complete genome sequence of Caulobacter crescentus.</title>
        <authorList>
            <person name="Nierman W.C."/>
            <person name="Feldblyum T.V."/>
            <person name="Laub M.T."/>
            <person name="Paulsen I.T."/>
            <person name="Nelson K.E."/>
            <person name="Eisen J.A."/>
            <person name="Heidelberg J.F."/>
            <person name="Alley M.R.K."/>
            <person name="Ohta N."/>
            <person name="Maddock J.R."/>
            <person name="Potocka I."/>
            <person name="Nelson W.C."/>
            <person name="Newton A."/>
            <person name="Stephens C."/>
            <person name="Phadke N.D."/>
            <person name="Ely B."/>
            <person name="DeBoy R.T."/>
            <person name="Dodson R.J."/>
            <person name="Durkin A.S."/>
            <person name="Gwinn M.L."/>
            <person name="Haft D.H."/>
            <person name="Kolonay J.F."/>
            <person name="Smit J."/>
            <person name="Craven M.B."/>
            <person name="Khouri H.M."/>
            <person name="Shetty J."/>
            <person name="Berry K.J."/>
            <person name="Utterback T.R."/>
            <person name="Tran K."/>
            <person name="Wolf A.M."/>
            <person name="Vamathevan J.J."/>
            <person name="Ermolaeva M.D."/>
            <person name="White O."/>
            <person name="Salzberg S.L."/>
            <person name="Venter J.C."/>
            <person name="Shapiro L."/>
            <person name="Fraser C.M."/>
        </authorList>
    </citation>
    <scope>NUCLEOTIDE SEQUENCE [LARGE SCALE GENOMIC DNA]</scope>
    <source>
        <strain>ATCC 19089 / CIP 103742 / CB 15</strain>
    </source>
</reference>
<evidence type="ECO:0000250" key="1"/>
<evidence type="ECO:0000305" key="2"/>
<keyword id="KW-1005">Bacterial flagellum biogenesis</keyword>
<keyword id="KW-1006">Bacterial flagellum protein export</keyword>
<keyword id="KW-1003">Cell membrane</keyword>
<keyword id="KW-0145">Chemotaxis</keyword>
<keyword id="KW-0472">Membrane</keyword>
<keyword id="KW-0653">Protein transport</keyword>
<keyword id="KW-1185">Reference proteome</keyword>
<keyword id="KW-0813">Transport</keyword>
<dbReference type="EMBL" id="AE005673">
    <property type="protein sequence ID" value="AAK25003.1"/>
    <property type="molecule type" value="Genomic_DNA"/>
</dbReference>
<dbReference type="PIR" id="G87625">
    <property type="entry name" value="G87625"/>
</dbReference>
<dbReference type="RefSeq" id="NP_421835.1">
    <property type="nucleotide sequence ID" value="NC_002696.2"/>
</dbReference>
<dbReference type="RefSeq" id="WP_010920877.1">
    <property type="nucleotide sequence ID" value="NC_002696.2"/>
</dbReference>
<dbReference type="SMR" id="P0CAU7"/>
<dbReference type="STRING" id="190650.CC_3041"/>
<dbReference type="EnsemblBacteria" id="AAK25003">
    <property type="protein sequence ID" value="AAK25003"/>
    <property type="gene ID" value="CC_3041"/>
</dbReference>
<dbReference type="KEGG" id="ccr:CC_3041"/>
<dbReference type="PATRIC" id="fig|190650.5.peg.3045"/>
<dbReference type="eggNOG" id="ENOG5032TEW">
    <property type="taxonomic scope" value="Bacteria"/>
</dbReference>
<dbReference type="HOGENOM" id="CLU_1841518_0_0_5"/>
<dbReference type="BioCyc" id="CAULO:CC3041-MONOMER"/>
<dbReference type="Proteomes" id="UP000001816">
    <property type="component" value="Chromosome"/>
</dbReference>
<dbReference type="GO" id="GO:0005886">
    <property type="term" value="C:plasma membrane"/>
    <property type="evidence" value="ECO:0007669"/>
    <property type="project" value="UniProtKB-SubCell"/>
</dbReference>
<dbReference type="GO" id="GO:0044781">
    <property type="term" value="P:bacterial-type flagellum organization"/>
    <property type="evidence" value="ECO:0007669"/>
    <property type="project" value="UniProtKB-KW"/>
</dbReference>
<dbReference type="GO" id="GO:0006935">
    <property type="term" value="P:chemotaxis"/>
    <property type="evidence" value="ECO:0007669"/>
    <property type="project" value="UniProtKB-KW"/>
</dbReference>
<dbReference type="GO" id="GO:0015031">
    <property type="term" value="P:protein transport"/>
    <property type="evidence" value="ECO:0007669"/>
    <property type="project" value="UniProtKB-KW"/>
</dbReference>
<dbReference type="Gene3D" id="1.10.287.1700">
    <property type="match status" value="1"/>
</dbReference>
<dbReference type="InterPro" id="IPR053716">
    <property type="entry name" value="Flag_assembly_chemotaxis_eff"/>
</dbReference>
<name>FLIJ_CAUVC</name>
<proteinExistence type="inferred from homology"/>
<accession>P0CAU7</accession>
<accession>O05529</accession>